<gene>
    <name evidence="7" type="primary">CHAC2</name>
</gene>
<dbReference type="EC" id="4.3.2.7" evidence="4"/>
<dbReference type="EMBL" id="AC007883">
    <property type="protein sequence ID" value="AAY24351.1"/>
    <property type="molecule type" value="Genomic_DNA"/>
</dbReference>
<dbReference type="EMBL" id="CH471053">
    <property type="protein sequence ID" value="EAX00172.1"/>
    <property type="molecule type" value="Genomic_DNA"/>
</dbReference>
<dbReference type="EMBL" id="BC017941">
    <property type="protein sequence ID" value="AAH17941.1"/>
    <property type="molecule type" value="mRNA"/>
</dbReference>
<dbReference type="EMBL" id="BC019239">
    <property type="protein sequence ID" value="AAH19239.1"/>
    <property type="molecule type" value="mRNA"/>
</dbReference>
<dbReference type="EMBL" id="BC025376">
    <property type="protein sequence ID" value="AAH25376.1"/>
    <property type="molecule type" value="mRNA"/>
</dbReference>
<dbReference type="EMBL" id="BC053896">
    <property type="protein sequence ID" value="AAH53896.1"/>
    <property type="molecule type" value="mRNA"/>
</dbReference>
<dbReference type="CCDS" id="CCDS33196.1"/>
<dbReference type="RefSeq" id="NP_001008708.1">
    <property type="nucleotide sequence ID" value="NM_001008708.4"/>
</dbReference>
<dbReference type="RefSeq" id="NP_001333056.1">
    <property type="nucleotide sequence ID" value="NM_001346127.1"/>
</dbReference>
<dbReference type="PDB" id="6K95">
    <property type="method" value="X-ray"/>
    <property type="resolution" value="2.29 A"/>
    <property type="chains" value="A/B/C=1-184"/>
</dbReference>
<dbReference type="PDB" id="6KY0">
    <property type="method" value="X-ray"/>
    <property type="resolution" value="2.06 A"/>
    <property type="chains" value="A/B/C=1-174"/>
</dbReference>
<dbReference type="PDB" id="6KY1">
    <property type="method" value="X-ray"/>
    <property type="resolution" value="2.04 A"/>
    <property type="chains" value="A/B/C=1-175"/>
</dbReference>
<dbReference type="PDBsum" id="6K95"/>
<dbReference type="PDBsum" id="6KY0"/>
<dbReference type="PDBsum" id="6KY1"/>
<dbReference type="SMR" id="Q8WUX2"/>
<dbReference type="BioGRID" id="138943">
    <property type="interactions" value="23"/>
</dbReference>
<dbReference type="FunCoup" id="Q8WUX2">
    <property type="interactions" value="324"/>
</dbReference>
<dbReference type="IntAct" id="Q8WUX2">
    <property type="interactions" value="17"/>
</dbReference>
<dbReference type="STRING" id="9606.ENSP00000295304"/>
<dbReference type="GlyGen" id="Q8WUX2">
    <property type="glycosylation" value="1 site, 1 O-linked glycan (1 site)"/>
</dbReference>
<dbReference type="iPTMnet" id="Q8WUX2"/>
<dbReference type="PhosphoSitePlus" id="Q8WUX2"/>
<dbReference type="BioMuta" id="CHAC2"/>
<dbReference type="DMDM" id="74730779"/>
<dbReference type="jPOST" id="Q8WUX2"/>
<dbReference type="MassIVE" id="Q8WUX2"/>
<dbReference type="PaxDb" id="9606-ENSP00000295304"/>
<dbReference type="PeptideAtlas" id="Q8WUX2"/>
<dbReference type="ProteomicsDB" id="74718"/>
<dbReference type="Pumba" id="Q8WUX2"/>
<dbReference type="Antibodypedia" id="30211">
    <property type="antibodies" value="108 antibodies from 19 providers"/>
</dbReference>
<dbReference type="DNASU" id="494143"/>
<dbReference type="Ensembl" id="ENST00000295304.5">
    <property type="protein sequence ID" value="ENSP00000295304.4"/>
    <property type="gene ID" value="ENSG00000143942.5"/>
</dbReference>
<dbReference type="GeneID" id="494143"/>
<dbReference type="KEGG" id="hsa:494143"/>
<dbReference type="MANE-Select" id="ENST00000295304.5">
    <property type="protein sequence ID" value="ENSP00000295304.4"/>
    <property type="RefSeq nucleotide sequence ID" value="NM_001008708.4"/>
    <property type="RefSeq protein sequence ID" value="NP_001008708.1"/>
</dbReference>
<dbReference type="UCSC" id="uc002rxk.2">
    <property type="organism name" value="human"/>
</dbReference>
<dbReference type="AGR" id="HGNC:32363"/>
<dbReference type="CTD" id="494143"/>
<dbReference type="DisGeNET" id="494143"/>
<dbReference type="GeneCards" id="CHAC2"/>
<dbReference type="HGNC" id="HGNC:32363">
    <property type="gene designation" value="CHAC2"/>
</dbReference>
<dbReference type="HPA" id="ENSG00000143942">
    <property type="expression patterns" value="Low tissue specificity"/>
</dbReference>
<dbReference type="MIM" id="617446">
    <property type="type" value="gene"/>
</dbReference>
<dbReference type="neXtProt" id="NX_Q8WUX2"/>
<dbReference type="OpenTargets" id="ENSG00000143942"/>
<dbReference type="PharmGKB" id="PA142672120"/>
<dbReference type="VEuPathDB" id="HostDB:ENSG00000143942"/>
<dbReference type="eggNOG" id="KOG3182">
    <property type="taxonomic scope" value="Eukaryota"/>
</dbReference>
<dbReference type="GeneTree" id="ENSGT00390000003855"/>
<dbReference type="HOGENOM" id="CLU_070703_2_2_1"/>
<dbReference type="InParanoid" id="Q8WUX2"/>
<dbReference type="OMA" id="DHREKDG"/>
<dbReference type="OrthoDB" id="1933483at2759"/>
<dbReference type="PAN-GO" id="Q8WUX2">
    <property type="GO annotations" value="3 GO annotations based on evolutionary models"/>
</dbReference>
<dbReference type="PhylomeDB" id="Q8WUX2"/>
<dbReference type="TreeFam" id="TF313048"/>
<dbReference type="BioCyc" id="MetaCyc:ENSG00000143942-MONOMER"/>
<dbReference type="BRENDA" id="4.3.2.7">
    <property type="organism ID" value="2681"/>
</dbReference>
<dbReference type="PathwayCommons" id="Q8WUX2"/>
<dbReference type="Reactome" id="R-HSA-174403">
    <property type="pathway name" value="Glutathione synthesis and recycling"/>
</dbReference>
<dbReference type="SignaLink" id="Q8WUX2"/>
<dbReference type="BioGRID-ORCS" id="494143">
    <property type="hits" value="19 hits in 1151 CRISPR screens"/>
</dbReference>
<dbReference type="GenomeRNAi" id="494143"/>
<dbReference type="Pharos" id="Q8WUX2">
    <property type="development level" value="Tbio"/>
</dbReference>
<dbReference type="PRO" id="PR:Q8WUX2"/>
<dbReference type="Proteomes" id="UP000005640">
    <property type="component" value="Chromosome 2"/>
</dbReference>
<dbReference type="RNAct" id="Q8WUX2">
    <property type="molecule type" value="protein"/>
</dbReference>
<dbReference type="Bgee" id="ENSG00000143942">
    <property type="expression patterns" value="Expressed in male germ line stem cell (sensu Vertebrata) in testis and 136 other cell types or tissues"/>
</dbReference>
<dbReference type="GO" id="GO:0005737">
    <property type="term" value="C:cytoplasm"/>
    <property type="evidence" value="ECO:0000318"/>
    <property type="project" value="GO_Central"/>
</dbReference>
<dbReference type="GO" id="GO:0005829">
    <property type="term" value="C:cytosol"/>
    <property type="evidence" value="ECO:0000304"/>
    <property type="project" value="Reactome"/>
</dbReference>
<dbReference type="GO" id="GO:0003839">
    <property type="term" value="F:gamma-glutamylcyclotransferase activity"/>
    <property type="evidence" value="ECO:0000304"/>
    <property type="project" value="Reactome"/>
</dbReference>
<dbReference type="GO" id="GO:0061928">
    <property type="term" value="F:glutathione specific gamma-glutamylcyclotransferase activity"/>
    <property type="evidence" value="ECO:0000314"/>
    <property type="project" value="FlyBase"/>
</dbReference>
<dbReference type="GO" id="GO:0006750">
    <property type="term" value="P:glutathione biosynthetic process"/>
    <property type="evidence" value="ECO:0000304"/>
    <property type="project" value="Reactome"/>
</dbReference>
<dbReference type="GO" id="GO:0006751">
    <property type="term" value="P:glutathione catabolic process"/>
    <property type="evidence" value="ECO:0000318"/>
    <property type="project" value="GO_Central"/>
</dbReference>
<dbReference type="CDD" id="cd06661">
    <property type="entry name" value="GGCT_like"/>
    <property type="match status" value="1"/>
</dbReference>
<dbReference type="FunFam" id="3.10.490.10:FF:000003">
    <property type="entry name" value="Gamma-glutamylcyclotransferase"/>
    <property type="match status" value="1"/>
</dbReference>
<dbReference type="Gene3D" id="3.10.490.10">
    <property type="entry name" value="Gamma-glutamyl cyclotransferase-like"/>
    <property type="match status" value="1"/>
</dbReference>
<dbReference type="InterPro" id="IPR006840">
    <property type="entry name" value="ChaC"/>
</dbReference>
<dbReference type="InterPro" id="IPR013024">
    <property type="entry name" value="GGCT-like"/>
</dbReference>
<dbReference type="InterPro" id="IPR036568">
    <property type="entry name" value="GGCT-like_sf"/>
</dbReference>
<dbReference type="PANTHER" id="PTHR12192">
    <property type="entry name" value="CATION TRANSPORT PROTEIN CHAC-RELATED"/>
    <property type="match status" value="1"/>
</dbReference>
<dbReference type="PANTHER" id="PTHR12192:SF2">
    <property type="entry name" value="GLUTATHIONE-SPECIFIC GAMMA-GLUTAMYLCYCLOTRANSFERASE 2"/>
    <property type="match status" value="1"/>
</dbReference>
<dbReference type="Pfam" id="PF04752">
    <property type="entry name" value="ChaC"/>
    <property type="match status" value="1"/>
</dbReference>
<dbReference type="SUPFAM" id="SSF110857">
    <property type="entry name" value="Gamma-glutamyl cyclotransferase-like"/>
    <property type="match status" value="1"/>
</dbReference>
<name>CHAC2_HUMAN</name>
<accession>Q8WUX2</accession>
<accession>Q8WVI8</accession>
<reference key="1">
    <citation type="journal article" date="2005" name="Nature">
        <title>Generation and annotation of the DNA sequences of human chromosomes 2 and 4.</title>
        <authorList>
            <person name="Hillier L.W."/>
            <person name="Graves T.A."/>
            <person name="Fulton R.S."/>
            <person name="Fulton L.A."/>
            <person name="Pepin K.H."/>
            <person name="Minx P."/>
            <person name="Wagner-McPherson C."/>
            <person name="Layman D."/>
            <person name="Wylie K."/>
            <person name="Sekhon M."/>
            <person name="Becker M.C."/>
            <person name="Fewell G.A."/>
            <person name="Delehaunty K.D."/>
            <person name="Miner T.L."/>
            <person name="Nash W.E."/>
            <person name="Kremitzki C."/>
            <person name="Oddy L."/>
            <person name="Du H."/>
            <person name="Sun H."/>
            <person name="Bradshaw-Cordum H."/>
            <person name="Ali J."/>
            <person name="Carter J."/>
            <person name="Cordes M."/>
            <person name="Harris A."/>
            <person name="Isak A."/>
            <person name="van Brunt A."/>
            <person name="Nguyen C."/>
            <person name="Du F."/>
            <person name="Courtney L."/>
            <person name="Kalicki J."/>
            <person name="Ozersky P."/>
            <person name="Abbott S."/>
            <person name="Armstrong J."/>
            <person name="Belter E.A."/>
            <person name="Caruso L."/>
            <person name="Cedroni M."/>
            <person name="Cotton M."/>
            <person name="Davidson T."/>
            <person name="Desai A."/>
            <person name="Elliott G."/>
            <person name="Erb T."/>
            <person name="Fronick C."/>
            <person name="Gaige T."/>
            <person name="Haakenson W."/>
            <person name="Haglund K."/>
            <person name="Holmes A."/>
            <person name="Harkins R."/>
            <person name="Kim K."/>
            <person name="Kruchowski S.S."/>
            <person name="Strong C.M."/>
            <person name="Grewal N."/>
            <person name="Goyea E."/>
            <person name="Hou S."/>
            <person name="Levy A."/>
            <person name="Martinka S."/>
            <person name="Mead K."/>
            <person name="McLellan M.D."/>
            <person name="Meyer R."/>
            <person name="Randall-Maher J."/>
            <person name="Tomlinson C."/>
            <person name="Dauphin-Kohlberg S."/>
            <person name="Kozlowicz-Reilly A."/>
            <person name="Shah N."/>
            <person name="Swearengen-Shahid S."/>
            <person name="Snider J."/>
            <person name="Strong J.T."/>
            <person name="Thompson J."/>
            <person name="Yoakum M."/>
            <person name="Leonard S."/>
            <person name="Pearman C."/>
            <person name="Trani L."/>
            <person name="Radionenko M."/>
            <person name="Waligorski J.E."/>
            <person name="Wang C."/>
            <person name="Rock S.M."/>
            <person name="Tin-Wollam A.-M."/>
            <person name="Maupin R."/>
            <person name="Latreille P."/>
            <person name="Wendl M.C."/>
            <person name="Yang S.-P."/>
            <person name="Pohl C."/>
            <person name="Wallis J.W."/>
            <person name="Spieth J."/>
            <person name="Bieri T.A."/>
            <person name="Berkowicz N."/>
            <person name="Nelson J.O."/>
            <person name="Osborne J."/>
            <person name="Ding L."/>
            <person name="Meyer R."/>
            <person name="Sabo A."/>
            <person name="Shotland Y."/>
            <person name="Sinha P."/>
            <person name="Wohldmann P.E."/>
            <person name="Cook L.L."/>
            <person name="Hickenbotham M.T."/>
            <person name="Eldred J."/>
            <person name="Williams D."/>
            <person name="Jones T.A."/>
            <person name="She X."/>
            <person name="Ciccarelli F.D."/>
            <person name="Izaurralde E."/>
            <person name="Taylor J."/>
            <person name="Schmutz J."/>
            <person name="Myers R.M."/>
            <person name="Cox D.R."/>
            <person name="Huang X."/>
            <person name="McPherson J.D."/>
            <person name="Mardis E.R."/>
            <person name="Clifton S.W."/>
            <person name="Warren W.C."/>
            <person name="Chinwalla A.T."/>
            <person name="Eddy S.R."/>
            <person name="Marra M.A."/>
            <person name="Ovcharenko I."/>
            <person name="Furey T.S."/>
            <person name="Miller W."/>
            <person name="Eichler E.E."/>
            <person name="Bork P."/>
            <person name="Suyama M."/>
            <person name="Torrents D."/>
            <person name="Waterston R.H."/>
            <person name="Wilson R.K."/>
        </authorList>
    </citation>
    <scope>NUCLEOTIDE SEQUENCE [LARGE SCALE GENOMIC DNA]</scope>
</reference>
<reference key="2">
    <citation type="submission" date="2005-09" db="EMBL/GenBank/DDBJ databases">
        <authorList>
            <person name="Mural R.J."/>
            <person name="Istrail S."/>
            <person name="Sutton G.G."/>
            <person name="Florea L."/>
            <person name="Halpern A.L."/>
            <person name="Mobarry C.M."/>
            <person name="Lippert R."/>
            <person name="Walenz B."/>
            <person name="Shatkay H."/>
            <person name="Dew I."/>
            <person name="Miller J.R."/>
            <person name="Flanigan M.J."/>
            <person name="Edwards N.J."/>
            <person name="Bolanos R."/>
            <person name="Fasulo D."/>
            <person name="Halldorsson B.V."/>
            <person name="Hannenhalli S."/>
            <person name="Turner R."/>
            <person name="Yooseph S."/>
            <person name="Lu F."/>
            <person name="Nusskern D.R."/>
            <person name="Shue B.C."/>
            <person name="Zheng X.H."/>
            <person name="Zhong F."/>
            <person name="Delcher A.L."/>
            <person name="Huson D.H."/>
            <person name="Kravitz S.A."/>
            <person name="Mouchard L."/>
            <person name="Reinert K."/>
            <person name="Remington K.A."/>
            <person name="Clark A.G."/>
            <person name="Waterman M.S."/>
            <person name="Eichler E.E."/>
            <person name="Adams M.D."/>
            <person name="Hunkapiller M.W."/>
            <person name="Myers E.W."/>
            <person name="Venter J.C."/>
        </authorList>
    </citation>
    <scope>NUCLEOTIDE SEQUENCE [LARGE SCALE GENOMIC DNA]</scope>
</reference>
<reference key="3">
    <citation type="journal article" date="2004" name="Genome Res.">
        <title>The status, quality, and expansion of the NIH full-length cDNA project: the Mammalian Gene Collection (MGC).</title>
        <authorList>
            <consortium name="The MGC Project Team"/>
        </authorList>
    </citation>
    <scope>NUCLEOTIDE SEQUENCE [LARGE SCALE MRNA]</scope>
    <scope>VARIANT GLY-82</scope>
    <source>
        <tissue>Brain</tissue>
        <tissue>Kidney</tissue>
        <tissue>Uterus</tissue>
    </source>
</reference>
<reference key="4">
    <citation type="journal article" date="2017" name="J. Biol. Chem.">
        <title>ChaC2, an enzyme for slow turnover of cytosolic glutathione.</title>
        <authorList>
            <person name="Kaur A."/>
            <person name="Gautam R."/>
            <person name="Srivastava R."/>
            <person name="Chandel A."/>
            <person name="Kumar A."/>
            <person name="Karthikeyan S."/>
            <person name="Bachhawat A.K."/>
        </authorList>
    </citation>
    <scope>FUNCTION</scope>
    <scope>CATALYTIC ACTIVITY</scope>
    <scope>BIOPHYSICOCHEMICAL PROPERTIES</scope>
    <scope>SUBUNIT</scope>
    <scope>SUBCELLULAR LOCATION</scope>
</reference>
<proteinExistence type="evidence at protein level"/>
<protein>
    <recommendedName>
        <fullName evidence="5">Glutathione-specific gamma-glutamylcyclotransferase 2</fullName>
        <shortName evidence="6">Gamma-GCG 2</shortName>
        <ecNumber evidence="4">4.3.2.7</ecNumber>
    </recommendedName>
    <alternativeName>
        <fullName evidence="2">Cation transport regulator-like protein 2</fullName>
    </alternativeName>
</protein>
<comment type="function">
    <text evidence="4">Catalyzes the cleavage of glutathione into 5-oxo-L-proline and a Cys-Gly dipeptide. Acts specifically on glutathione, but not on other gamma-glutamyl peptides.</text>
</comment>
<comment type="catalytic activity">
    <reaction evidence="4">
        <text>glutathione = L-cysteinylglycine + 5-oxo-L-proline</text>
        <dbReference type="Rhea" id="RHEA:47724"/>
        <dbReference type="ChEBI" id="CHEBI:57925"/>
        <dbReference type="ChEBI" id="CHEBI:58402"/>
        <dbReference type="ChEBI" id="CHEBI:61694"/>
        <dbReference type="EC" id="4.3.2.7"/>
    </reaction>
</comment>
<comment type="biophysicochemical properties">
    <kinetics>
        <KM evidence="4">3.7 mM for glutathione</KM>
        <text evidence="4">kcat is 15.9 min(-1) for glutathione.</text>
    </kinetics>
</comment>
<comment type="subunit">
    <text evidence="4">Monomer.</text>
</comment>
<comment type="subcellular location">
    <subcellularLocation>
        <location evidence="4">Cytoplasm</location>
        <location evidence="4">Cytosol</location>
    </subcellularLocation>
</comment>
<comment type="similarity">
    <text evidence="6">Belongs to the gamma-glutamylcyclotransferase family. ChaC subfamily.</text>
</comment>
<feature type="chain" id="PRO_0000314912" description="Glutathione-specific gamma-glutamylcyclotransferase 2">
    <location>
        <begin position="1"/>
        <end position="184"/>
    </location>
</feature>
<feature type="active site" description="Proton acceptor" evidence="1">
    <location>
        <position position="83"/>
    </location>
</feature>
<feature type="binding site" evidence="1">
    <location>
        <begin position="3"/>
        <end position="8"/>
    </location>
    <ligand>
        <name>substrate</name>
    </ligand>
</feature>
<feature type="sequence variant" id="VAR_038123" description="In dbSNP:rs17851583." evidence="3">
    <original>R</original>
    <variation>G</variation>
    <location>
        <position position="82"/>
    </location>
</feature>
<feature type="strand" evidence="8">
    <location>
        <begin position="2"/>
        <end position="5"/>
    </location>
</feature>
<feature type="helix" evidence="8">
    <location>
        <begin position="8"/>
        <end position="10"/>
    </location>
</feature>
<feature type="strand" evidence="8">
    <location>
        <begin position="18"/>
        <end position="42"/>
    </location>
</feature>
<feature type="strand" evidence="8">
    <location>
        <begin position="47"/>
        <end position="66"/>
    </location>
</feature>
<feature type="helix" evidence="8">
    <location>
        <begin position="72"/>
        <end position="80"/>
    </location>
</feature>
<feature type="strand" evidence="8">
    <location>
        <begin position="87"/>
        <end position="101"/>
    </location>
</feature>
<feature type="strand" evidence="8">
    <location>
        <begin position="104"/>
        <end position="111"/>
    </location>
</feature>
<feature type="strand" evidence="8">
    <location>
        <begin position="113"/>
        <end position="115"/>
    </location>
</feature>
<feature type="helix" evidence="8">
    <location>
        <begin position="124"/>
        <end position="133"/>
    </location>
</feature>
<feature type="helix" evidence="8">
    <location>
        <begin position="141"/>
        <end position="155"/>
    </location>
</feature>
<feature type="helix" evidence="8">
    <location>
        <begin position="158"/>
        <end position="161"/>
    </location>
</feature>
<feature type="helix" evidence="8">
    <location>
        <begin position="162"/>
        <end position="171"/>
    </location>
</feature>
<organism>
    <name type="scientific">Homo sapiens</name>
    <name type="common">Human</name>
    <dbReference type="NCBI Taxonomy" id="9606"/>
    <lineage>
        <taxon>Eukaryota</taxon>
        <taxon>Metazoa</taxon>
        <taxon>Chordata</taxon>
        <taxon>Craniata</taxon>
        <taxon>Vertebrata</taxon>
        <taxon>Euteleostomi</taxon>
        <taxon>Mammalia</taxon>
        <taxon>Eutheria</taxon>
        <taxon>Euarchontoglires</taxon>
        <taxon>Primates</taxon>
        <taxon>Haplorrhini</taxon>
        <taxon>Catarrhini</taxon>
        <taxon>Hominidae</taxon>
        <taxon>Homo</taxon>
    </lineage>
</organism>
<evidence type="ECO:0000250" key="1">
    <source>
        <dbReference type="UniProtKB" id="O75223"/>
    </source>
</evidence>
<evidence type="ECO:0000250" key="2">
    <source>
        <dbReference type="UniProtKB" id="Q9BUX1"/>
    </source>
</evidence>
<evidence type="ECO:0000269" key="3">
    <source>
    </source>
</evidence>
<evidence type="ECO:0000269" key="4">
    <source>
    </source>
</evidence>
<evidence type="ECO:0000303" key="5">
    <source>
    </source>
</evidence>
<evidence type="ECO:0000305" key="6"/>
<evidence type="ECO:0000312" key="7">
    <source>
        <dbReference type="HGNC" id="HGNC:32363"/>
    </source>
</evidence>
<evidence type="ECO:0007829" key="8">
    <source>
        <dbReference type="PDB" id="6KY1"/>
    </source>
</evidence>
<keyword id="KW-0002">3D-structure</keyword>
<keyword id="KW-0963">Cytoplasm</keyword>
<keyword id="KW-0456">Lyase</keyword>
<keyword id="KW-1267">Proteomics identification</keyword>
<keyword id="KW-1185">Reference proteome</keyword>
<sequence>MWVFGYGSLIWKVDFPYQDKLVGYITNYSRRFWQGSTDHRGVPGKPGRVVTLVEDPAGCVWGVAYRLPVGKEEEVKAYLDFREKGGYRTTTVIFYPKDPTTKPFSVLLYIGTCDNPDYLGPAPLEDIAEQIFNAAGPSGRNTEYLFELANSIRNLVPEEADEHLFALEKLVKERLEGKQNLNCI</sequence>